<organism>
    <name type="scientific">Synechococcus sp. (strain JA-3-3Ab)</name>
    <name type="common">Cyanobacteria bacterium Yellowstone A-Prime</name>
    <dbReference type="NCBI Taxonomy" id="321327"/>
    <lineage>
        <taxon>Bacteria</taxon>
        <taxon>Bacillati</taxon>
        <taxon>Cyanobacteriota</taxon>
        <taxon>Cyanophyceae</taxon>
        <taxon>Synechococcales</taxon>
        <taxon>Synechococcaceae</taxon>
        <taxon>Synechococcus</taxon>
    </lineage>
</organism>
<comment type="function">
    <text evidence="1">DNA ligase that catalyzes the formation of phosphodiester linkages between 5'-phosphoryl and 3'-hydroxyl groups in double-stranded DNA using NAD as a coenzyme and as the energy source for the reaction. It is essential for DNA replication and repair of damaged DNA.</text>
</comment>
<comment type="catalytic activity">
    <reaction evidence="1">
        <text>NAD(+) + (deoxyribonucleotide)n-3'-hydroxyl + 5'-phospho-(deoxyribonucleotide)m = (deoxyribonucleotide)n+m + AMP + beta-nicotinamide D-nucleotide.</text>
        <dbReference type="EC" id="6.5.1.2"/>
    </reaction>
</comment>
<comment type="cofactor">
    <cofactor evidence="1">
        <name>Mg(2+)</name>
        <dbReference type="ChEBI" id="CHEBI:18420"/>
    </cofactor>
    <cofactor evidence="1">
        <name>Mn(2+)</name>
        <dbReference type="ChEBI" id="CHEBI:29035"/>
    </cofactor>
</comment>
<comment type="similarity">
    <text evidence="1">Belongs to the NAD-dependent DNA ligase family. LigA subfamily.</text>
</comment>
<dbReference type="EC" id="6.5.1.2" evidence="1"/>
<dbReference type="EMBL" id="CP000239">
    <property type="protein sequence ID" value="ABC99009.1"/>
    <property type="molecule type" value="Genomic_DNA"/>
</dbReference>
<dbReference type="RefSeq" id="WP_011429693.1">
    <property type="nucleotide sequence ID" value="NC_007775.1"/>
</dbReference>
<dbReference type="SMR" id="Q2JW63"/>
<dbReference type="STRING" id="321327.CYA_0803"/>
<dbReference type="KEGG" id="cya:CYA_0803"/>
<dbReference type="eggNOG" id="COG0272">
    <property type="taxonomic scope" value="Bacteria"/>
</dbReference>
<dbReference type="HOGENOM" id="CLU_007764_2_1_3"/>
<dbReference type="OrthoDB" id="9759736at2"/>
<dbReference type="Proteomes" id="UP000008818">
    <property type="component" value="Chromosome"/>
</dbReference>
<dbReference type="GO" id="GO:0005829">
    <property type="term" value="C:cytosol"/>
    <property type="evidence" value="ECO:0007669"/>
    <property type="project" value="TreeGrafter"/>
</dbReference>
<dbReference type="GO" id="GO:0003677">
    <property type="term" value="F:DNA binding"/>
    <property type="evidence" value="ECO:0007669"/>
    <property type="project" value="InterPro"/>
</dbReference>
<dbReference type="GO" id="GO:0003911">
    <property type="term" value="F:DNA ligase (NAD+) activity"/>
    <property type="evidence" value="ECO:0007669"/>
    <property type="project" value="UniProtKB-UniRule"/>
</dbReference>
<dbReference type="GO" id="GO:0046872">
    <property type="term" value="F:metal ion binding"/>
    <property type="evidence" value="ECO:0007669"/>
    <property type="project" value="UniProtKB-KW"/>
</dbReference>
<dbReference type="GO" id="GO:0006281">
    <property type="term" value="P:DNA repair"/>
    <property type="evidence" value="ECO:0007669"/>
    <property type="project" value="UniProtKB-KW"/>
</dbReference>
<dbReference type="GO" id="GO:0006260">
    <property type="term" value="P:DNA replication"/>
    <property type="evidence" value="ECO:0007669"/>
    <property type="project" value="UniProtKB-KW"/>
</dbReference>
<dbReference type="CDD" id="cd17748">
    <property type="entry name" value="BRCT_DNA_ligase_like"/>
    <property type="match status" value="1"/>
</dbReference>
<dbReference type="CDD" id="cd00114">
    <property type="entry name" value="LIGANc"/>
    <property type="match status" value="1"/>
</dbReference>
<dbReference type="FunFam" id="1.10.150.20:FF:000006">
    <property type="entry name" value="DNA ligase"/>
    <property type="match status" value="1"/>
</dbReference>
<dbReference type="FunFam" id="1.10.150.20:FF:000007">
    <property type="entry name" value="DNA ligase"/>
    <property type="match status" value="1"/>
</dbReference>
<dbReference type="FunFam" id="1.10.287.610:FF:000002">
    <property type="entry name" value="DNA ligase"/>
    <property type="match status" value="1"/>
</dbReference>
<dbReference type="FunFam" id="2.40.50.140:FF:000012">
    <property type="entry name" value="DNA ligase"/>
    <property type="match status" value="1"/>
</dbReference>
<dbReference type="FunFam" id="3.30.470.30:FF:000001">
    <property type="entry name" value="DNA ligase"/>
    <property type="match status" value="1"/>
</dbReference>
<dbReference type="Gene3D" id="6.20.10.30">
    <property type="match status" value="1"/>
</dbReference>
<dbReference type="Gene3D" id="1.10.150.20">
    <property type="entry name" value="5' to 3' exonuclease, C-terminal subdomain"/>
    <property type="match status" value="2"/>
</dbReference>
<dbReference type="Gene3D" id="3.40.50.10190">
    <property type="entry name" value="BRCT domain"/>
    <property type="match status" value="1"/>
</dbReference>
<dbReference type="Gene3D" id="3.30.470.30">
    <property type="entry name" value="DNA ligase/mRNA capping enzyme"/>
    <property type="match status" value="1"/>
</dbReference>
<dbReference type="Gene3D" id="1.10.287.610">
    <property type="entry name" value="Helix hairpin bin"/>
    <property type="match status" value="1"/>
</dbReference>
<dbReference type="Gene3D" id="2.40.50.140">
    <property type="entry name" value="Nucleic acid-binding proteins"/>
    <property type="match status" value="1"/>
</dbReference>
<dbReference type="HAMAP" id="MF_01588">
    <property type="entry name" value="DNA_ligase_A"/>
    <property type="match status" value="1"/>
</dbReference>
<dbReference type="InterPro" id="IPR001357">
    <property type="entry name" value="BRCT_dom"/>
</dbReference>
<dbReference type="InterPro" id="IPR036420">
    <property type="entry name" value="BRCT_dom_sf"/>
</dbReference>
<dbReference type="InterPro" id="IPR041663">
    <property type="entry name" value="DisA/LigA_HHH"/>
</dbReference>
<dbReference type="InterPro" id="IPR001679">
    <property type="entry name" value="DNA_ligase"/>
</dbReference>
<dbReference type="InterPro" id="IPR018239">
    <property type="entry name" value="DNA_ligase_AS"/>
</dbReference>
<dbReference type="InterPro" id="IPR033136">
    <property type="entry name" value="DNA_ligase_CS"/>
</dbReference>
<dbReference type="InterPro" id="IPR013839">
    <property type="entry name" value="DNAligase_adenylation"/>
</dbReference>
<dbReference type="InterPro" id="IPR013840">
    <property type="entry name" value="DNAligase_N"/>
</dbReference>
<dbReference type="InterPro" id="IPR003583">
    <property type="entry name" value="Hlx-hairpin-Hlx_DNA-bd_motif"/>
</dbReference>
<dbReference type="InterPro" id="IPR012340">
    <property type="entry name" value="NA-bd_OB-fold"/>
</dbReference>
<dbReference type="InterPro" id="IPR004150">
    <property type="entry name" value="NAD_DNA_ligase_OB"/>
</dbReference>
<dbReference type="InterPro" id="IPR010994">
    <property type="entry name" value="RuvA_2-like"/>
</dbReference>
<dbReference type="InterPro" id="IPR004149">
    <property type="entry name" value="Znf_DNAligase_C4"/>
</dbReference>
<dbReference type="NCBIfam" id="TIGR00575">
    <property type="entry name" value="dnlj"/>
    <property type="match status" value="1"/>
</dbReference>
<dbReference type="NCBIfam" id="NF005932">
    <property type="entry name" value="PRK07956.1"/>
    <property type="match status" value="1"/>
</dbReference>
<dbReference type="PANTHER" id="PTHR23389">
    <property type="entry name" value="CHROMOSOME TRANSMISSION FIDELITY FACTOR 18"/>
    <property type="match status" value="1"/>
</dbReference>
<dbReference type="PANTHER" id="PTHR23389:SF9">
    <property type="entry name" value="DNA LIGASE"/>
    <property type="match status" value="1"/>
</dbReference>
<dbReference type="Pfam" id="PF00533">
    <property type="entry name" value="BRCT"/>
    <property type="match status" value="1"/>
</dbReference>
<dbReference type="Pfam" id="PF01653">
    <property type="entry name" value="DNA_ligase_aden"/>
    <property type="match status" value="1"/>
</dbReference>
<dbReference type="Pfam" id="PF03120">
    <property type="entry name" value="DNA_ligase_OB"/>
    <property type="match status" value="1"/>
</dbReference>
<dbReference type="Pfam" id="PF03119">
    <property type="entry name" value="DNA_ligase_ZBD"/>
    <property type="match status" value="1"/>
</dbReference>
<dbReference type="Pfam" id="PF12826">
    <property type="entry name" value="HHH_2"/>
    <property type="match status" value="1"/>
</dbReference>
<dbReference type="Pfam" id="PF14520">
    <property type="entry name" value="HHH_5"/>
    <property type="match status" value="1"/>
</dbReference>
<dbReference type="Pfam" id="PF22745">
    <property type="entry name" value="Nlig-Ia"/>
    <property type="match status" value="1"/>
</dbReference>
<dbReference type="PIRSF" id="PIRSF001604">
    <property type="entry name" value="LigA"/>
    <property type="match status" value="1"/>
</dbReference>
<dbReference type="SMART" id="SM00292">
    <property type="entry name" value="BRCT"/>
    <property type="match status" value="1"/>
</dbReference>
<dbReference type="SMART" id="SM00278">
    <property type="entry name" value="HhH1"/>
    <property type="match status" value="3"/>
</dbReference>
<dbReference type="SMART" id="SM00532">
    <property type="entry name" value="LIGANc"/>
    <property type="match status" value="1"/>
</dbReference>
<dbReference type="SUPFAM" id="SSF52113">
    <property type="entry name" value="BRCT domain"/>
    <property type="match status" value="1"/>
</dbReference>
<dbReference type="SUPFAM" id="SSF56091">
    <property type="entry name" value="DNA ligase/mRNA capping enzyme, catalytic domain"/>
    <property type="match status" value="1"/>
</dbReference>
<dbReference type="SUPFAM" id="SSF50249">
    <property type="entry name" value="Nucleic acid-binding proteins"/>
    <property type="match status" value="1"/>
</dbReference>
<dbReference type="SUPFAM" id="SSF47781">
    <property type="entry name" value="RuvA domain 2-like"/>
    <property type="match status" value="1"/>
</dbReference>
<dbReference type="PROSITE" id="PS50172">
    <property type="entry name" value="BRCT"/>
    <property type="match status" value="1"/>
</dbReference>
<dbReference type="PROSITE" id="PS01055">
    <property type="entry name" value="DNA_LIGASE_N1"/>
    <property type="match status" value="1"/>
</dbReference>
<dbReference type="PROSITE" id="PS01056">
    <property type="entry name" value="DNA_LIGASE_N2"/>
    <property type="match status" value="1"/>
</dbReference>
<proteinExistence type="inferred from homology"/>
<evidence type="ECO:0000255" key="1">
    <source>
        <dbReference type="HAMAP-Rule" id="MF_01588"/>
    </source>
</evidence>
<gene>
    <name evidence="1" type="primary">ligA</name>
    <name type="ordered locus">CYA_0803</name>
</gene>
<feature type="chain" id="PRO_0000313483" description="DNA ligase">
    <location>
        <begin position="1"/>
        <end position="673"/>
    </location>
</feature>
<feature type="domain" description="BRCT" evidence="1">
    <location>
        <begin position="595"/>
        <end position="673"/>
    </location>
</feature>
<feature type="active site" description="N6-AMP-lysine intermediate" evidence="1">
    <location>
        <position position="119"/>
    </location>
</feature>
<feature type="binding site" evidence="1">
    <location>
        <begin position="33"/>
        <end position="37"/>
    </location>
    <ligand>
        <name>NAD(+)</name>
        <dbReference type="ChEBI" id="CHEBI:57540"/>
    </ligand>
</feature>
<feature type="binding site" evidence="1">
    <location>
        <begin position="82"/>
        <end position="83"/>
    </location>
    <ligand>
        <name>NAD(+)</name>
        <dbReference type="ChEBI" id="CHEBI:57540"/>
    </ligand>
</feature>
<feature type="binding site" evidence="1">
    <location>
        <position position="117"/>
    </location>
    <ligand>
        <name>NAD(+)</name>
        <dbReference type="ChEBI" id="CHEBI:57540"/>
    </ligand>
</feature>
<feature type="binding site" evidence="1">
    <location>
        <position position="140"/>
    </location>
    <ligand>
        <name>NAD(+)</name>
        <dbReference type="ChEBI" id="CHEBI:57540"/>
    </ligand>
</feature>
<feature type="binding site" evidence="1">
    <location>
        <position position="177"/>
    </location>
    <ligand>
        <name>NAD(+)</name>
        <dbReference type="ChEBI" id="CHEBI:57540"/>
    </ligand>
</feature>
<feature type="binding site" evidence="1">
    <location>
        <position position="295"/>
    </location>
    <ligand>
        <name>NAD(+)</name>
        <dbReference type="ChEBI" id="CHEBI:57540"/>
    </ligand>
</feature>
<feature type="binding site" evidence="1">
    <location>
        <position position="319"/>
    </location>
    <ligand>
        <name>NAD(+)</name>
        <dbReference type="ChEBI" id="CHEBI:57540"/>
    </ligand>
</feature>
<feature type="binding site" evidence="1">
    <location>
        <position position="413"/>
    </location>
    <ligand>
        <name>Zn(2+)</name>
        <dbReference type="ChEBI" id="CHEBI:29105"/>
    </ligand>
</feature>
<feature type="binding site" evidence="1">
    <location>
        <position position="416"/>
    </location>
    <ligand>
        <name>Zn(2+)</name>
        <dbReference type="ChEBI" id="CHEBI:29105"/>
    </ligand>
</feature>
<feature type="binding site" evidence="1">
    <location>
        <position position="431"/>
    </location>
    <ligand>
        <name>Zn(2+)</name>
        <dbReference type="ChEBI" id="CHEBI:29105"/>
    </ligand>
</feature>
<feature type="binding site" evidence="1">
    <location>
        <position position="436"/>
    </location>
    <ligand>
        <name>Zn(2+)</name>
        <dbReference type="ChEBI" id="CHEBI:29105"/>
    </ligand>
</feature>
<protein>
    <recommendedName>
        <fullName evidence="1">DNA ligase</fullName>
        <ecNumber evidence="1">6.5.1.2</ecNumber>
    </recommendedName>
    <alternativeName>
        <fullName evidence="1">Polydeoxyribonucleotide synthase [NAD(+)]</fullName>
    </alternativeName>
</protein>
<sequence length="673" mass="74347">MDPKLEQRARELRALLQKASIAYYVHDAPILEDSVYDRLYRELQELERAYPELITPDSPTQRVGEKPAEQFPTVSHRIPLYSLENAFNLEELKEWQERLWRVLGRTPEEGELEYVCELKIDGAALALTYVDGLLQRGATRGDGQSGEDITPNIRAIPSIPLRLATAAPPPVLEVRGEAYLPIAEFERINRERCSAGDPPFANPRNCAAGTLRQLDSRVVAARKLSFFAYALHWPEGWPSGDPPQTQWECLQRLKDLGLPVNPLSQVCRGLEEVVQFYERWRQAQLPYACDGVVVKLNSLRLQEEAGFTQKFPRWAIALKYPAQEVPTRIRAIVASVGRTGAVTPVAELEPVLLAGTTVSRASLHNADRLEELDVHIGDTAIVRKAGEIIPEVVGILKELRPPDAVPYRLPSHCPECGTLLVRPAGEAITRCPNPACPAKIRGQLQHWASRDAMDIEGLGEKRVAQLVEKLGVRTVADLYRLTPEHLESLEGMGSRSSQKLVQAIQRSRQQPWERVLYGLGIPHVGVVTAQILAQHFPAPELLAQARAEDIAQIYGIGAEIAEAVVAWFADPAHQKLLQELRELGIPALPRQAAPAVSQVLAGKKFVITGTLPTLSRQQAKAWIESRGGKVTASVSRQTDYVVVGSDPGSKLKQAQALGIPLLSEAELLALDPK</sequence>
<name>DNLJ_SYNJA</name>
<reference key="1">
    <citation type="journal article" date="2007" name="ISME J.">
        <title>Population level functional diversity in a microbial community revealed by comparative genomic and metagenomic analyses.</title>
        <authorList>
            <person name="Bhaya D."/>
            <person name="Grossman A.R."/>
            <person name="Steunou A.-S."/>
            <person name="Khuri N."/>
            <person name="Cohan F.M."/>
            <person name="Hamamura N."/>
            <person name="Melendrez M.C."/>
            <person name="Bateson M.M."/>
            <person name="Ward D.M."/>
            <person name="Heidelberg J.F."/>
        </authorList>
    </citation>
    <scope>NUCLEOTIDE SEQUENCE [LARGE SCALE GENOMIC DNA]</scope>
    <source>
        <strain>JA-3-3Ab</strain>
    </source>
</reference>
<accession>Q2JW63</accession>
<keyword id="KW-0227">DNA damage</keyword>
<keyword id="KW-0234">DNA repair</keyword>
<keyword id="KW-0235">DNA replication</keyword>
<keyword id="KW-0436">Ligase</keyword>
<keyword id="KW-0460">Magnesium</keyword>
<keyword id="KW-0464">Manganese</keyword>
<keyword id="KW-0479">Metal-binding</keyword>
<keyword id="KW-0520">NAD</keyword>
<keyword id="KW-0862">Zinc</keyword>